<proteinExistence type="inferred from homology"/>
<gene>
    <name evidence="1" type="primary">rlmN</name>
    <name type="ordered locus">CYB_1027</name>
</gene>
<keyword id="KW-0004">4Fe-4S</keyword>
<keyword id="KW-0963">Cytoplasm</keyword>
<keyword id="KW-1015">Disulfide bond</keyword>
<keyword id="KW-0408">Iron</keyword>
<keyword id="KW-0411">Iron-sulfur</keyword>
<keyword id="KW-0479">Metal-binding</keyword>
<keyword id="KW-0489">Methyltransferase</keyword>
<keyword id="KW-1185">Reference proteome</keyword>
<keyword id="KW-0698">rRNA processing</keyword>
<keyword id="KW-0949">S-adenosyl-L-methionine</keyword>
<keyword id="KW-0808">Transferase</keyword>
<keyword id="KW-0819">tRNA processing</keyword>
<feature type="chain" id="PRO_0000350486" description="Probable dual-specificity RNA methyltransferase RlmN">
    <location>
        <begin position="1"/>
        <end position="352"/>
    </location>
</feature>
<feature type="domain" description="Radical SAM core" evidence="2">
    <location>
        <begin position="99"/>
        <end position="332"/>
    </location>
</feature>
<feature type="active site" description="Proton acceptor" evidence="1">
    <location>
        <position position="93"/>
    </location>
</feature>
<feature type="active site" description="S-methylcysteine intermediate" evidence="1">
    <location>
        <position position="337"/>
    </location>
</feature>
<feature type="binding site" evidence="1">
    <location>
        <position position="113"/>
    </location>
    <ligand>
        <name>[4Fe-4S] cluster</name>
        <dbReference type="ChEBI" id="CHEBI:49883"/>
        <note>4Fe-4S-S-AdoMet</note>
    </ligand>
</feature>
<feature type="binding site" evidence="1">
    <location>
        <position position="117"/>
    </location>
    <ligand>
        <name>[4Fe-4S] cluster</name>
        <dbReference type="ChEBI" id="CHEBI:49883"/>
        <note>4Fe-4S-S-AdoMet</note>
    </ligand>
</feature>
<feature type="binding site" evidence="1">
    <location>
        <position position="120"/>
    </location>
    <ligand>
        <name>[4Fe-4S] cluster</name>
        <dbReference type="ChEBI" id="CHEBI:49883"/>
        <note>4Fe-4S-S-AdoMet</note>
    </ligand>
</feature>
<feature type="binding site" evidence="1">
    <location>
        <begin position="160"/>
        <end position="161"/>
    </location>
    <ligand>
        <name>S-adenosyl-L-methionine</name>
        <dbReference type="ChEBI" id="CHEBI:59789"/>
    </ligand>
</feature>
<feature type="binding site" evidence="1">
    <location>
        <position position="190"/>
    </location>
    <ligand>
        <name>S-adenosyl-L-methionine</name>
        <dbReference type="ChEBI" id="CHEBI:59789"/>
    </ligand>
</feature>
<feature type="binding site" evidence="1">
    <location>
        <begin position="213"/>
        <end position="215"/>
    </location>
    <ligand>
        <name>S-adenosyl-L-methionine</name>
        <dbReference type="ChEBI" id="CHEBI:59789"/>
    </ligand>
</feature>
<feature type="binding site" evidence="1">
    <location>
        <position position="294"/>
    </location>
    <ligand>
        <name>S-adenosyl-L-methionine</name>
        <dbReference type="ChEBI" id="CHEBI:59789"/>
    </ligand>
</feature>
<feature type="disulfide bond" description="(transient)" evidence="1">
    <location>
        <begin position="106"/>
        <end position="337"/>
    </location>
</feature>
<protein>
    <recommendedName>
        <fullName evidence="1">Probable dual-specificity RNA methyltransferase RlmN</fullName>
        <ecNumber evidence="1">2.1.1.192</ecNumber>
    </recommendedName>
    <alternativeName>
        <fullName evidence="1">23S rRNA (adenine(2503)-C(2))-methyltransferase</fullName>
    </alternativeName>
    <alternativeName>
        <fullName evidence="1">23S rRNA m2A2503 methyltransferase</fullName>
    </alternativeName>
    <alternativeName>
        <fullName evidence="1">Ribosomal RNA large subunit methyltransferase N</fullName>
    </alternativeName>
    <alternativeName>
        <fullName evidence="1">tRNA (adenine(37)-C(2))-methyltransferase</fullName>
    </alternativeName>
    <alternativeName>
        <fullName evidence="1">tRNA m2A37 methyltransferase</fullName>
    </alternativeName>
</protein>
<organism>
    <name type="scientific">Synechococcus sp. (strain JA-2-3B'a(2-13))</name>
    <name type="common">Cyanobacteria bacterium Yellowstone B-Prime</name>
    <dbReference type="NCBI Taxonomy" id="321332"/>
    <lineage>
        <taxon>Bacteria</taxon>
        <taxon>Bacillati</taxon>
        <taxon>Cyanobacteriota</taxon>
        <taxon>Cyanophyceae</taxon>
        <taxon>Synechococcales</taxon>
        <taxon>Synechococcaceae</taxon>
        <taxon>Synechococcus</taxon>
    </lineage>
</organism>
<sequence length="352" mass="39404">MSALPIPLLGQSLSALKDWAVAQGQPAYRGQQLHAWIYQKGIRSLEQVTVFPRAWREAVQSYPVGRSRIVQRTEARDGTVKFLLGLADGQLIETVGIPTAKRLTVCVSSQVGCPMACDFCATGKMGYRRNLELHEILDQVLTVQEDFGRRVSHVVFMGMGEPLLNRDTVVQAIRSLNQDIGIGQRHITLSTVGVPRQIAWLAQQDLQVTLAVSLHAPNQDLRQRLIPSASHYPLDTLIQDCRDYMLRTGRRVSFEYTLLSGVNDLPIHARQLAQLLQQASRSGVQLHVNLIPYNPISEADYQRPHPTRVREFVRQLEQHQVRATVRQTRGLDGNAACGQLRGSFLRSLPGDL</sequence>
<name>RLMN_SYNJB</name>
<reference key="1">
    <citation type="journal article" date="2007" name="ISME J.">
        <title>Population level functional diversity in a microbial community revealed by comparative genomic and metagenomic analyses.</title>
        <authorList>
            <person name="Bhaya D."/>
            <person name="Grossman A.R."/>
            <person name="Steunou A.-S."/>
            <person name="Khuri N."/>
            <person name="Cohan F.M."/>
            <person name="Hamamura N."/>
            <person name="Melendrez M.C."/>
            <person name="Bateson M.M."/>
            <person name="Ward D.M."/>
            <person name="Heidelberg J.F."/>
        </authorList>
    </citation>
    <scope>NUCLEOTIDE SEQUENCE [LARGE SCALE GENOMIC DNA]</scope>
    <source>
        <strain>JA-2-3B'a(2-13)</strain>
    </source>
</reference>
<comment type="function">
    <text evidence="1">Specifically methylates position 2 of adenine 2503 in 23S rRNA and position 2 of adenine 37 in tRNAs.</text>
</comment>
<comment type="catalytic activity">
    <reaction evidence="1">
        <text>adenosine(2503) in 23S rRNA + 2 reduced [2Fe-2S]-[ferredoxin] + 2 S-adenosyl-L-methionine = 2-methyladenosine(2503) in 23S rRNA + 5'-deoxyadenosine + L-methionine + 2 oxidized [2Fe-2S]-[ferredoxin] + S-adenosyl-L-homocysteine</text>
        <dbReference type="Rhea" id="RHEA:42916"/>
        <dbReference type="Rhea" id="RHEA-COMP:10000"/>
        <dbReference type="Rhea" id="RHEA-COMP:10001"/>
        <dbReference type="Rhea" id="RHEA-COMP:10152"/>
        <dbReference type="Rhea" id="RHEA-COMP:10282"/>
        <dbReference type="ChEBI" id="CHEBI:17319"/>
        <dbReference type="ChEBI" id="CHEBI:33737"/>
        <dbReference type="ChEBI" id="CHEBI:33738"/>
        <dbReference type="ChEBI" id="CHEBI:57844"/>
        <dbReference type="ChEBI" id="CHEBI:57856"/>
        <dbReference type="ChEBI" id="CHEBI:59789"/>
        <dbReference type="ChEBI" id="CHEBI:74411"/>
        <dbReference type="ChEBI" id="CHEBI:74497"/>
        <dbReference type="EC" id="2.1.1.192"/>
    </reaction>
</comment>
<comment type="catalytic activity">
    <reaction evidence="1">
        <text>adenosine(37) in tRNA + 2 reduced [2Fe-2S]-[ferredoxin] + 2 S-adenosyl-L-methionine = 2-methyladenosine(37) in tRNA + 5'-deoxyadenosine + L-methionine + 2 oxidized [2Fe-2S]-[ferredoxin] + S-adenosyl-L-homocysteine</text>
        <dbReference type="Rhea" id="RHEA:43332"/>
        <dbReference type="Rhea" id="RHEA-COMP:10000"/>
        <dbReference type="Rhea" id="RHEA-COMP:10001"/>
        <dbReference type="Rhea" id="RHEA-COMP:10162"/>
        <dbReference type="Rhea" id="RHEA-COMP:10485"/>
        <dbReference type="ChEBI" id="CHEBI:17319"/>
        <dbReference type="ChEBI" id="CHEBI:33737"/>
        <dbReference type="ChEBI" id="CHEBI:33738"/>
        <dbReference type="ChEBI" id="CHEBI:57844"/>
        <dbReference type="ChEBI" id="CHEBI:57856"/>
        <dbReference type="ChEBI" id="CHEBI:59789"/>
        <dbReference type="ChEBI" id="CHEBI:74411"/>
        <dbReference type="ChEBI" id="CHEBI:74497"/>
        <dbReference type="EC" id="2.1.1.192"/>
    </reaction>
</comment>
<comment type="cofactor">
    <cofactor evidence="1">
        <name>[4Fe-4S] cluster</name>
        <dbReference type="ChEBI" id="CHEBI:49883"/>
    </cofactor>
    <text evidence="1">Binds 1 [4Fe-4S] cluster. The cluster is coordinated with 3 cysteines and an exchangeable S-adenosyl-L-methionine.</text>
</comment>
<comment type="subcellular location">
    <subcellularLocation>
        <location evidence="1">Cytoplasm</location>
    </subcellularLocation>
</comment>
<comment type="miscellaneous">
    <text evidence="1">Reaction proceeds by a ping-pong mechanism involving intermediate methylation of a conserved cysteine residue.</text>
</comment>
<comment type="similarity">
    <text evidence="1">Belongs to the radical SAM superfamily. RlmN family.</text>
</comment>
<accession>Q2JMN2</accession>
<dbReference type="EC" id="2.1.1.192" evidence="1"/>
<dbReference type="EMBL" id="CP000240">
    <property type="protein sequence ID" value="ABD02005.1"/>
    <property type="molecule type" value="Genomic_DNA"/>
</dbReference>
<dbReference type="RefSeq" id="WP_011432660.1">
    <property type="nucleotide sequence ID" value="NC_007776.1"/>
</dbReference>
<dbReference type="SMR" id="Q2JMN2"/>
<dbReference type="STRING" id="321332.CYB_1027"/>
<dbReference type="KEGG" id="cyb:CYB_1027"/>
<dbReference type="eggNOG" id="COG0820">
    <property type="taxonomic scope" value="Bacteria"/>
</dbReference>
<dbReference type="HOGENOM" id="CLU_029101_1_1_3"/>
<dbReference type="OrthoDB" id="9793973at2"/>
<dbReference type="Proteomes" id="UP000001938">
    <property type="component" value="Chromosome"/>
</dbReference>
<dbReference type="GO" id="GO:0005737">
    <property type="term" value="C:cytoplasm"/>
    <property type="evidence" value="ECO:0007669"/>
    <property type="project" value="UniProtKB-SubCell"/>
</dbReference>
<dbReference type="GO" id="GO:0051539">
    <property type="term" value="F:4 iron, 4 sulfur cluster binding"/>
    <property type="evidence" value="ECO:0007669"/>
    <property type="project" value="UniProtKB-UniRule"/>
</dbReference>
<dbReference type="GO" id="GO:0046872">
    <property type="term" value="F:metal ion binding"/>
    <property type="evidence" value="ECO:0007669"/>
    <property type="project" value="UniProtKB-KW"/>
</dbReference>
<dbReference type="GO" id="GO:0070040">
    <property type="term" value="F:rRNA (adenine(2503)-C2-)-methyltransferase activity"/>
    <property type="evidence" value="ECO:0007669"/>
    <property type="project" value="UniProtKB-UniRule"/>
</dbReference>
<dbReference type="GO" id="GO:0019843">
    <property type="term" value="F:rRNA binding"/>
    <property type="evidence" value="ECO:0007669"/>
    <property type="project" value="UniProtKB-UniRule"/>
</dbReference>
<dbReference type="GO" id="GO:0002935">
    <property type="term" value="F:tRNA (adenine(37)-C2)-methyltransferase activity"/>
    <property type="evidence" value="ECO:0007669"/>
    <property type="project" value="UniProtKB-UniRule"/>
</dbReference>
<dbReference type="GO" id="GO:0000049">
    <property type="term" value="F:tRNA binding"/>
    <property type="evidence" value="ECO:0007669"/>
    <property type="project" value="UniProtKB-UniRule"/>
</dbReference>
<dbReference type="GO" id="GO:0070475">
    <property type="term" value="P:rRNA base methylation"/>
    <property type="evidence" value="ECO:0007669"/>
    <property type="project" value="UniProtKB-UniRule"/>
</dbReference>
<dbReference type="GO" id="GO:0030488">
    <property type="term" value="P:tRNA methylation"/>
    <property type="evidence" value="ECO:0007669"/>
    <property type="project" value="UniProtKB-UniRule"/>
</dbReference>
<dbReference type="CDD" id="cd01335">
    <property type="entry name" value="Radical_SAM"/>
    <property type="match status" value="1"/>
</dbReference>
<dbReference type="FunFam" id="3.20.20.70:FF:000014">
    <property type="entry name" value="Probable dual-specificity RNA methyltransferase RlmN"/>
    <property type="match status" value="1"/>
</dbReference>
<dbReference type="Gene3D" id="1.10.150.530">
    <property type="match status" value="1"/>
</dbReference>
<dbReference type="Gene3D" id="3.20.20.70">
    <property type="entry name" value="Aldolase class I"/>
    <property type="match status" value="1"/>
</dbReference>
<dbReference type="HAMAP" id="MF_01849">
    <property type="entry name" value="RNA_methyltr_RlmN"/>
    <property type="match status" value="1"/>
</dbReference>
<dbReference type="InterPro" id="IPR013785">
    <property type="entry name" value="Aldolase_TIM"/>
</dbReference>
<dbReference type="InterPro" id="IPR040072">
    <property type="entry name" value="Methyltransferase_A"/>
</dbReference>
<dbReference type="InterPro" id="IPR048641">
    <property type="entry name" value="RlmN_N"/>
</dbReference>
<dbReference type="InterPro" id="IPR027492">
    <property type="entry name" value="RNA_MTrfase_RlmN"/>
</dbReference>
<dbReference type="InterPro" id="IPR004383">
    <property type="entry name" value="rRNA_lsu_MTrfase_RlmN/Cfr"/>
</dbReference>
<dbReference type="InterPro" id="IPR007197">
    <property type="entry name" value="rSAM"/>
</dbReference>
<dbReference type="NCBIfam" id="TIGR00048">
    <property type="entry name" value="rRNA_mod_RlmN"/>
    <property type="match status" value="1"/>
</dbReference>
<dbReference type="PANTHER" id="PTHR30544">
    <property type="entry name" value="23S RRNA METHYLTRANSFERASE"/>
    <property type="match status" value="1"/>
</dbReference>
<dbReference type="PANTHER" id="PTHR30544:SF5">
    <property type="entry name" value="RADICAL SAM CORE DOMAIN-CONTAINING PROTEIN"/>
    <property type="match status" value="1"/>
</dbReference>
<dbReference type="Pfam" id="PF04055">
    <property type="entry name" value="Radical_SAM"/>
    <property type="match status" value="1"/>
</dbReference>
<dbReference type="Pfam" id="PF21016">
    <property type="entry name" value="RlmN_N"/>
    <property type="match status" value="1"/>
</dbReference>
<dbReference type="PIRSF" id="PIRSF006004">
    <property type="entry name" value="CHP00048"/>
    <property type="match status" value="1"/>
</dbReference>
<dbReference type="SFLD" id="SFLDF00275">
    <property type="entry name" value="adenosine_C2_methyltransferase"/>
    <property type="match status" value="1"/>
</dbReference>
<dbReference type="SFLD" id="SFLDG01062">
    <property type="entry name" value="methyltransferase_(Class_A)"/>
    <property type="match status" value="1"/>
</dbReference>
<dbReference type="SUPFAM" id="SSF102114">
    <property type="entry name" value="Radical SAM enzymes"/>
    <property type="match status" value="1"/>
</dbReference>
<dbReference type="PROSITE" id="PS51918">
    <property type="entry name" value="RADICAL_SAM"/>
    <property type="match status" value="1"/>
</dbReference>
<evidence type="ECO:0000255" key="1">
    <source>
        <dbReference type="HAMAP-Rule" id="MF_01849"/>
    </source>
</evidence>
<evidence type="ECO:0000255" key="2">
    <source>
        <dbReference type="PROSITE-ProRule" id="PRU01266"/>
    </source>
</evidence>